<feature type="chain" id="PRO_0000358613" description="NADH-quinone oxidoreductase subunit C/D 1">
    <location>
        <begin position="1"/>
        <end position="593"/>
    </location>
</feature>
<feature type="region of interest" description="NADH dehydrogenase I subunit C" evidence="1">
    <location>
        <begin position="1"/>
        <end position="193"/>
    </location>
</feature>
<feature type="region of interest" description="NADH dehydrogenase I subunit D" evidence="1">
    <location>
        <begin position="217"/>
        <end position="593"/>
    </location>
</feature>
<name>NUCD1_AQUAE</name>
<accession>O66826</accession>
<proteinExistence type="inferred from homology"/>
<organism>
    <name type="scientific">Aquifex aeolicus (strain VF5)</name>
    <dbReference type="NCBI Taxonomy" id="224324"/>
    <lineage>
        <taxon>Bacteria</taxon>
        <taxon>Pseudomonadati</taxon>
        <taxon>Aquificota</taxon>
        <taxon>Aquificia</taxon>
        <taxon>Aquificales</taxon>
        <taxon>Aquificaceae</taxon>
        <taxon>Aquifex</taxon>
    </lineage>
</organism>
<evidence type="ECO:0000250" key="1"/>
<evidence type="ECO:0000305" key="2"/>
<comment type="function">
    <text evidence="1">NDH-1 shuttles electrons from NADH, via FMN and iron-sulfur (Fe-S) centers, to quinones in the respiratory chain. The immediate electron acceptor for the enzyme in this species is believed to be ubiquinone. Couples the redox reaction to proton translocation (for every two electrons transferred, four hydrogen ions are translocated across the cytoplasmic membrane), and thus conserves the redox energy in a proton gradient.</text>
</comment>
<comment type="catalytic activity">
    <reaction>
        <text>a quinone + NADH + 5 H(+)(in) = a quinol + NAD(+) + 4 H(+)(out)</text>
        <dbReference type="Rhea" id="RHEA:57888"/>
        <dbReference type="ChEBI" id="CHEBI:15378"/>
        <dbReference type="ChEBI" id="CHEBI:24646"/>
        <dbReference type="ChEBI" id="CHEBI:57540"/>
        <dbReference type="ChEBI" id="CHEBI:57945"/>
        <dbReference type="ChEBI" id="CHEBI:132124"/>
    </reaction>
</comment>
<comment type="subunit">
    <text evidence="1">NDH-1 is composed of 13 different subunits. Subunits NuoB, CD, E, F, and G constitute the peripheral sector of the complex (By similarity).</text>
</comment>
<comment type="subcellular location">
    <subcellularLocation>
        <location evidence="1">Cell inner membrane</location>
        <topology evidence="1">Peripheral membrane protein</topology>
        <orientation evidence="1">Cytoplasmic side</orientation>
    </subcellularLocation>
</comment>
<comment type="similarity">
    <text evidence="2">In the N-terminal section; belongs to the complex I 30 kDa subunit family.</text>
</comment>
<comment type="similarity">
    <text evidence="2">In the C-terminal section; belongs to the complex I 49 kDa subunit family.</text>
</comment>
<keyword id="KW-0997">Cell inner membrane</keyword>
<keyword id="KW-1003">Cell membrane</keyword>
<keyword id="KW-0472">Membrane</keyword>
<keyword id="KW-0511">Multifunctional enzyme</keyword>
<keyword id="KW-0520">NAD</keyword>
<keyword id="KW-0874">Quinone</keyword>
<keyword id="KW-1185">Reference proteome</keyword>
<keyword id="KW-1278">Translocase</keyword>
<keyword id="KW-0813">Transport</keyword>
<keyword id="KW-0830">Ubiquinone</keyword>
<dbReference type="EC" id="7.1.1.-"/>
<dbReference type="EMBL" id="AE000657">
    <property type="protein sequence ID" value="AAC06787.1"/>
    <property type="molecule type" value="Genomic_DNA"/>
</dbReference>
<dbReference type="PIR" id="F70349">
    <property type="entry name" value="F70349"/>
</dbReference>
<dbReference type="RefSeq" id="NP_213386.1">
    <property type="nucleotide sequence ID" value="NC_000918.1"/>
</dbReference>
<dbReference type="RefSeq" id="WP_010880324.1">
    <property type="nucleotide sequence ID" value="NC_000918.1"/>
</dbReference>
<dbReference type="SMR" id="O66826"/>
<dbReference type="FunCoup" id="O66826">
    <property type="interactions" value="305"/>
</dbReference>
<dbReference type="STRING" id="224324.aq_551"/>
<dbReference type="EnsemblBacteria" id="AAC06787">
    <property type="protein sequence ID" value="AAC06787"/>
    <property type="gene ID" value="aq_551"/>
</dbReference>
<dbReference type="KEGG" id="aae:aq_551"/>
<dbReference type="PATRIC" id="fig|224324.8.peg.452"/>
<dbReference type="eggNOG" id="COG0649">
    <property type="taxonomic scope" value="Bacteria"/>
</dbReference>
<dbReference type="eggNOG" id="COG0852">
    <property type="taxonomic scope" value="Bacteria"/>
</dbReference>
<dbReference type="HOGENOM" id="CLU_015134_3_2_0"/>
<dbReference type="InParanoid" id="O66826"/>
<dbReference type="OrthoDB" id="9801496at2"/>
<dbReference type="Proteomes" id="UP000000798">
    <property type="component" value="Chromosome"/>
</dbReference>
<dbReference type="GO" id="GO:0030964">
    <property type="term" value="C:NADH dehydrogenase complex"/>
    <property type="evidence" value="ECO:0007669"/>
    <property type="project" value="InterPro"/>
</dbReference>
<dbReference type="GO" id="GO:0005886">
    <property type="term" value="C:plasma membrane"/>
    <property type="evidence" value="ECO:0007669"/>
    <property type="project" value="UniProtKB-SubCell"/>
</dbReference>
<dbReference type="GO" id="GO:0051287">
    <property type="term" value="F:NAD binding"/>
    <property type="evidence" value="ECO:0007669"/>
    <property type="project" value="InterPro"/>
</dbReference>
<dbReference type="GO" id="GO:0008137">
    <property type="term" value="F:NADH dehydrogenase (ubiquinone) activity"/>
    <property type="evidence" value="ECO:0007669"/>
    <property type="project" value="InterPro"/>
</dbReference>
<dbReference type="GO" id="GO:0050136">
    <property type="term" value="F:NADH:ubiquinone reductase (non-electrogenic) activity"/>
    <property type="evidence" value="ECO:0007669"/>
    <property type="project" value="UniProtKB-UniRule"/>
</dbReference>
<dbReference type="GO" id="GO:0048038">
    <property type="term" value="F:quinone binding"/>
    <property type="evidence" value="ECO:0007669"/>
    <property type="project" value="UniProtKB-KW"/>
</dbReference>
<dbReference type="Gene3D" id="1.10.645.10">
    <property type="entry name" value="Cytochrome-c3 Hydrogenase, chain B"/>
    <property type="match status" value="1"/>
</dbReference>
<dbReference type="Gene3D" id="3.30.460.80">
    <property type="entry name" value="NADH:ubiquinone oxidoreductase, 30kDa subunit"/>
    <property type="match status" value="1"/>
</dbReference>
<dbReference type="HAMAP" id="MF_01397">
    <property type="entry name" value="NDH1_NuoCD_2"/>
    <property type="match status" value="1"/>
</dbReference>
<dbReference type="HAMAP" id="MF_01358">
    <property type="entry name" value="NDH1_NuoD"/>
    <property type="match status" value="1"/>
</dbReference>
<dbReference type="InterPro" id="IPR001135">
    <property type="entry name" value="NADH_Q_OxRdtase_suD"/>
</dbReference>
<dbReference type="InterPro" id="IPR037232">
    <property type="entry name" value="NADH_quin_OxRdtase_su_C/D-like"/>
</dbReference>
<dbReference type="InterPro" id="IPR001268">
    <property type="entry name" value="NADH_UbQ_OxRdtase_30kDa_su"/>
</dbReference>
<dbReference type="InterPro" id="IPR026662">
    <property type="entry name" value="NDH-1_subunit_CD"/>
</dbReference>
<dbReference type="InterPro" id="IPR022885">
    <property type="entry name" value="NDH1_su_D/H"/>
</dbReference>
<dbReference type="InterPro" id="IPR029014">
    <property type="entry name" value="NiFe-Hase_large"/>
</dbReference>
<dbReference type="NCBIfam" id="TIGR01962">
    <property type="entry name" value="NuoD"/>
    <property type="match status" value="1"/>
</dbReference>
<dbReference type="NCBIfam" id="NF004739">
    <property type="entry name" value="PRK06075.1"/>
    <property type="match status" value="1"/>
</dbReference>
<dbReference type="PANTHER" id="PTHR11993:SF10">
    <property type="entry name" value="NADH DEHYDROGENASE [UBIQUINONE] IRON-SULFUR PROTEIN 2, MITOCHONDRIAL"/>
    <property type="match status" value="1"/>
</dbReference>
<dbReference type="PANTHER" id="PTHR11993">
    <property type="entry name" value="NADH-UBIQUINONE OXIDOREDUCTASE 49 KDA SUBUNIT"/>
    <property type="match status" value="1"/>
</dbReference>
<dbReference type="Pfam" id="PF00329">
    <property type="entry name" value="Complex1_30kDa"/>
    <property type="match status" value="1"/>
</dbReference>
<dbReference type="Pfam" id="PF00346">
    <property type="entry name" value="Complex1_49kDa"/>
    <property type="match status" value="1"/>
</dbReference>
<dbReference type="SUPFAM" id="SSF56762">
    <property type="entry name" value="HydB/Nqo4-like"/>
    <property type="match status" value="1"/>
</dbReference>
<dbReference type="SUPFAM" id="SSF143243">
    <property type="entry name" value="Nqo5-like"/>
    <property type="match status" value="1"/>
</dbReference>
<sequence>MPWAKEGDLQELLKAFPQASVVELQNSTSVIVPKDILIDVLKYLKEKLGYKLFLDHSVVDLKDLLENEKEFNKVVKQNLIAFPEDRESRFQAFYILYNVDERKRVIVKTRTNGKLPTIEKLWFAGKWAERECYDMFGIEYEGHENLVRAFMWDTYPYFPLRKDFPLEGIPEQELPSLNEVVFGDNLEGLMNYDRMHTRVPTLEDLEVTEKKRLKKKAQIVLNWGPLHPGTHGTMWFLFDLEGERIVQTDVILGQLHRGVEKLAEHEMYNQFLVYTDRMDYLSALCSNQAWVVAIERLMGIHDKVPPKAKYIRTMMSELQRINSHLLWLGTYALDLGALTIFLYAFKEREKIMDIIEGITGARLTISYPRIGGVRMDLPEGALEVIKAFIKKFPEELKDWETILTRNRIWLRRNKEVGIISKEDAYFHGVTGPVIRGSGIPYDIRKFEPYDAYDEVEFDIPVGEIGDCYDRYLVRIEEMKQSIRIIEQCVAKLEKMSKNEPFFYEGEGKKLKLSLDGIGVKAPVGEIYSSGENPRGELGFYVVSTGGTSPYRVKIRPPSYYNLCIYPHLMKDRYVADAVTILASIDPVVGETDR</sequence>
<reference key="1">
    <citation type="journal article" date="1998" name="Nature">
        <title>The complete genome of the hyperthermophilic bacterium Aquifex aeolicus.</title>
        <authorList>
            <person name="Deckert G."/>
            <person name="Warren P.V."/>
            <person name="Gaasterland T."/>
            <person name="Young W.G."/>
            <person name="Lenox A.L."/>
            <person name="Graham D.E."/>
            <person name="Overbeek R."/>
            <person name="Snead M.A."/>
            <person name="Keller M."/>
            <person name="Aujay M."/>
            <person name="Huber R."/>
            <person name="Feldman R.A."/>
            <person name="Short J.M."/>
            <person name="Olsen G.J."/>
            <person name="Swanson R.V."/>
        </authorList>
    </citation>
    <scope>NUCLEOTIDE SEQUENCE [LARGE SCALE GENOMIC DNA]</scope>
    <source>
        <strain>VF5</strain>
    </source>
</reference>
<protein>
    <recommendedName>
        <fullName>NADH-quinone oxidoreductase subunit C/D 1</fullName>
        <ecNumber>7.1.1.-</ecNumber>
    </recommendedName>
    <alternativeName>
        <fullName>NADH dehydrogenase I subunit C/D 1</fullName>
    </alternativeName>
    <alternativeName>
        <fullName>NDH-1 subunit C/D 1</fullName>
    </alternativeName>
</protein>
<gene>
    <name type="primary">nuoC1</name>
    <name type="synonym">nuoCD</name>
    <name type="synonym">nuoD</name>
    <name type="synonym">nuoD1</name>
    <name type="ordered locus">aq_551</name>
</gene>